<feature type="chain" id="PRO_0000169399" description="UPF0441 protein YgiB">
    <location>
        <begin position="1"/>
        <end position="223"/>
    </location>
</feature>
<feature type="region of interest" description="Disordered" evidence="2">
    <location>
        <begin position="178"/>
        <end position="223"/>
    </location>
</feature>
<feature type="compositionally biased region" description="Low complexity" evidence="2">
    <location>
        <begin position="178"/>
        <end position="195"/>
    </location>
</feature>
<feature type="compositionally biased region" description="Polar residues" evidence="2">
    <location>
        <begin position="204"/>
        <end position="223"/>
    </location>
</feature>
<name>YGIB_ECOL6</name>
<proteinExistence type="inferred from homology"/>
<keyword id="KW-1185">Reference proteome</keyword>
<gene>
    <name evidence="1" type="primary">ygiB</name>
    <name type="ordered locus">c3783</name>
</gene>
<accession>P0ADT3</accession>
<accession>P24195</accession>
<organism>
    <name type="scientific">Escherichia coli O6:H1 (strain CFT073 / ATCC 700928 / UPEC)</name>
    <dbReference type="NCBI Taxonomy" id="199310"/>
    <lineage>
        <taxon>Bacteria</taxon>
        <taxon>Pseudomonadati</taxon>
        <taxon>Pseudomonadota</taxon>
        <taxon>Gammaproteobacteria</taxon>
        <taxon>Enterobacterales</taxon>
        <taxon>Enterobacteriaceae</taxon>
        <taxon>Escherichia</taxon>
    </lineage>
</organism>
<evidence type="ECO:0000255" key="1">
    <source>
        <dbReference type="HAMAP-Rule" id="MF_01188"/>
    </source>
</evidence>
<evidence type="ECO:0000256" key="2">
    <source>
        <dbReference type="SAM" id="MobiDB-lite"/>
    </source>
</evidence>
<evidence type="ECO:0000305" key="3"/>
<sequence>MKRTKSIRHASFRKNWSARHLTPVALAVATVFMLAGCEKSDETVSLYQNADDCSAANPGKSAECTTAYNNALKEAERTAPKYATREDCVAEFGEGQCQQAPAQAGMAPENQAQAQQSSGSFWMPLMAGYMMGRLMGGGAGFAQQPLFSSKNPASPAYGKYTDATGKNYGAAQPGRTMTVPKTAMAPKPATTTTVTRGGFGESVAKQSTMQRSATGTSSRSMGG</sequence>
<comment type="similarity">
    <text evidence="1">Belongs to the UPF0441 family.</text>
</comment>
<comment type="sequence caution" evidence="3">
    <conflict type="erroneous initiation">
        <sequence resource="EMBL-CDS" id="AAN82227"/>
    </conflict>
</comment>
<dbReference type="EMBL" id="AE014075">
    <property type="protein sequence ID" value="AAN82227.1"/>
    <property type="status" value="ALT_INIT"/>
    <property type="molecule type" value="Genomic_DNA"/>
</dbReference>
<dbReference type="RefSeq" id="WP_000831543.1">
    <property type="nucleotide sequence ID" value="NZ_CP051263.1"/>
</dbReference>
<dbReference type="SMR" id="P0ADT3"/>
<dbReference type="STRING" id="199310.c3783"/>
<dbReference type="KEGG" id="ecc:c3783"/>
<dbReference type="eggNOG" id="COG5463">
    <property type="taxonomic scope" value="Bacteria"/>
</dbReference>
<dbReference type="HOGENOM" id="CLU_095624_0_0_6"/>
<dbReference type="Proteomes" id="UP000001410">
    <property type="component" value="Chromosome"/>
</dbReference>
<dbReference type="HAMAP" id="MF_01188">
    <property type="entry name" value="UPF0441"/>
    <property type="match status" value="1"/>
</dbReference>
<dbReference type="InterPro" id="IPR009576">
    <property type="entry name" value="Biofilm_formation_YgiB"/>
</dbReference>
<dbReference type="NCBIfam" id="NF008655">
    <property type="entry name" value="PRK11653.1"/>
    <property type="match status" value="1"/>
</dbReference>
<dbReference type="Pfam" id="PF06693">
    <property type="entry name" value="DUF1190"/>
    <property type="match status" value="1"/>
</dbReference>
<protein>
    <recommendedName>
        <fullName evidence="1">UPF0441 protein YgiB</fullName>
    </recommendedName>
</protein>
<reference key="1">
    <citation type="journal article" date="2002" name="Proc. Natl. Acad. Sci. U.S.A.">
        <title>Extensive mosaic structure revealed by the complete genome sequence of uropathogenic Escherichia coli.</title>
        <authorList>
            <person name="Welch R.A."/>
            <person name="Burland V."/>
            <person name="Plunkett G. III"/>
            <person name="Redford P."/>
            <person name="Roesch P."/>
            <person name="Rasko D."/>
            <person name="Buckles E.L."/>
            <person name="Liou S.-R."/>
            <person name="Boutin A."/>
            <person name="Hackett J."/>
            <person name="Stroud D."/>
            <person name="Mayhew G.F."/>
            <person name="Rose D.J."/>
            <person name="Zhou S."/>
            <person name="Schwartz D.C."/>
            <person name="Perna N.T."/>
            <person name="Mobley H.L.T."/>
            <person name="Donnenberg M.S."/>
            <person name="Blattner F.R."/>
        </authorList>
    </citation>
    <scope>NUCLEOTIDE SEQUENCE [LARGE SCALE GENOMIC DNA]</scope>
    <source>
        <strain>CFT073 / ATCC 700928 / UPEC</strain>
    </source>
</reference>